<name>OOSP2_MOUSE</name>
<reference key="1">
    <citation type="journal article" date="2005" name="Science">
        <title>The transcriptional landscape of the mammalian genome.</title>
        <authorList>
            <person name="Carninci P."/>
            <person name="Kasukawa T."/>
            <person name="Katayama S."/>
            <person name="Gough J."/>
            <person name="Frith M.C."/>
            <person name="Maeda N."/>
            <person name="Oyama R."/>
            <person name="Ravasi T."/>
            <person name="Lenhard B."/>
            <person name="Wells C."/>
            <person name="Kodzius R."/>
            <person name="Shimokawa K."/>
            <person name="Bajic V.B."/>
            <person name="Brenner S.E."/>
            <person name="Batalov S."/>
            <person name="Forrest A.R."/>
            <person name="Zavolan M."/>
            <person name="Davis M.J."/>
            <person name="Wilming L.G."/>
            <person name="Aidinis V."/>
            <person name="Allen J.E."/>
            <person name="Ambesi-Impiombato A."/>
            <person name="Apweiler R."/>
            <person name="Aturaliya R.N."/>
            <person name="Bailey T.L."/>
            <person name="Bansal M."/>
            <person name="Baxter L."/>
            <person name="Beisel K.W."/>
            <person name="Bersano T."/>
            <person name="Bono H."/>
            <person name="Chalk A.M."/>
            <person name="Chiu K.P."/>
            <person name="Choudhary V."/>
            <person name="Christoffels A."/>
            <person name="Clutterbuck D.R."/>
            <person name="Crowe M.L."/>
            <person name="Dalla E."/>
            <person name="Dalrymple B.P."/>
            <person name="de Bono B."/>
            <person name="Della Gatta G."/>
            <person name="di Bernardo D."/>
            <person name="Down T."/>
            <person name="Engstrom P."/>
            <person name="Fagiolini M."/>
            <person name="Faulkner G."/>
            <person name="Fletcher C.F."/>
            <person name="Fukushima T."/>
            <person name="Furuno M."/>
            <person name="Futaki S."/>
            <person name="Gariboldi M."/>
            <person name="Georgii-Hemming P."/>
            <person name="Gingeras T.R."/>
            <person name="Gojobori T."/>
            <person name="Green R.E."/>
            <person name="Gustincich S."/>
            <person name="Harbers M."/>
            <person name="Hayashi Y."/>
            <person name="Hensch T.K."/>
            <person name="Hirokawa N."/>
            <person name="Hill D."/>
            <person name="Huminiecki L."/>
            <person name="Iacono M."/>
            <person name="Ikeo K."/>
            <person name="Iwama A."/>
            <person name="Ishikawa T."/>
            <person name="Jakt M."/>
            <person name="Kanapin A."/>
            <person name="Katoh M."/>
            <person name="Kawasawa Y."/>
            <person name="Kelso J."/>
            <person name="Kitamura H."/>
            <person name="Kitano H."/>
            <person name="Kollias G."/>
            <person name="Krishnan S.P."/>
            <person name="Kruger A."/>
            <person name="Kummerfeld S.K."/>
            <person name="Kurochkin I.V."/>
            <person name="Lareau L.F."/>
            <person name="Lazarevic D."/>
            <person name="Lipovich L."/>
            <person name="Liu J."/>
            <person name="Liuni S."/>
            <person name="McWilliam S."/>
            <person name="Madan Babu M."/>
            <person name="Madera M."/>
            <person name="Marchionni L."/>
            <person name="Matsuda H."/>
            <person name="Matsuzawa S."/>
            <person name="Miki H."/>
            <person name="Mignone F."/>
            <person name="Miyake S."/>
            <person name="Morris K."/>
            <person name="Mottagui-Tabar S."/>
            <person name="Mulder N."/>
            <person name="Nakano N."/>
            <person name="Nakauchi H."/>
            <person name="Ng P."/>
            <person name="Nilsson R."/>
            <person name="Nishiguchi S."/>
            <person name="Nishikawa S."/>
            <person name="Nori F."/>
            <person name="Ohara O."/>
            <person name="Okazaki Y."/>
            <person name="Orlando V."/>
            <person name="Pang K.C."/>
            <person name="Pavan W.J."/>
            <person name="Pavesi G."/>
            <person name="Pesole G."/>
            <person name="Petrovsky N."/>
            <person name="Piazza S."/>
            <person name="Reed J."/>
            <person name="Reid J.F."/>
            <person name="Ring B.Z."/>
            <person name="Ringwald M."/>
            <person name="Rost B."/>
            <person name="Ruan Y."/>
            <person name="Salzberg S.L."/>
            <person name="Sandelin A."/>
            <person name="Schneider C."/>
            <person name="Schoenbach C."/>
            <person name="Sekiguchi K."/>
            <person name="Semple C.A."/>
            <person name="Seno S."/>
            <person name="Sessa L."/>
            <person name="Sheng Y."/>
            <person name="Shibata Y."/>
            <person name="Shimada H."/>
            <person name="Shimada K."/>
            <person name="Silva D."/>
            <person name="Sinclair B."/>
            <person name="Sperling S."/>
            <person name="Stupka E."/>
            <person name="Sugiura K."/>
            <person name="Sultana R."/>
            <person name="Takenaka Y."/>
            <person name="Taki K."/>
            <person name="Tammoja K."/>
            <person name="Tan S.L."/>
            <person name="Tang S."/>
            <person name="Taylor M.S."/>
            <person name="Tegner J."/>
            <person name="Teichmann S.A."/>
            <person name="Ueda H.R."/>
            <person name="van Nimwegen E."/>
            <person name="Verardo R."/>
            <person name="Wei C.L."/>
            <person name="Yagi K."/>
            <person name="Yamanishi H."/>
            <person name="Zabarovsky E."/>
            <person name="Zhu S."/>
            <person name="Zimmer A."/>
            <person name="Hide W."/>
            <person name="Bult C."/>
            <person name="Grimmond S.M."/>
            <person name="Teasdale R.D."/>
            <person name="Liu E.T."/>
            <person name="Brusic V."/>
            <person name="Quackenbush J."/>
            <person name="Wahlestedt C."/>
            <person name="Mattick J.S."/>
            <person name="Hume D.A."/>
            <person name="Kai C."/>
            <person name="Sasaki D."/>
            <person name="Tomaru Y."/>
            <person name="Fukuda S."/>
            <person name="Kanamori-Katayama M."/>
            <person name="Suzuki M."/>
            <person name="Aoki J."/>
            <person name="Arakawa T."/>
            <person name="Iida J."/>
            <person name="Imamura K."/>
            <person name="Itoh M."/>
            <person name="Kato T."/>
            <person name="Kawaji H."/>
            <person name="Kawagashira N."/>
            <person name="Kawashima T."/>
            <person name="Kojima M."/>
            <person name="Kondo S."/>
            <person name="Konno H."/>
            <person name="Nakano K."/>
            <person name="Ninomiya N."/>
            <person name="Nishio T."/>
            <person name="Okada M."/>
            <person name="Plessy C."/>
            <person name="Shibata K."/>
            <person name="Shiraki T."/>
            <person name="Suzuki S."/>
            <person name="Tagami M."/>
            <person name="Waki K."/>
            <person name="Watahiki A."/>
            <person name="Okamura-Oho Y."/>
            <person name="Suzuki H."/>
            <person name="Kawai J."/>
            <person name="Hayashizaki Y."/>
        </authorList>
    </citation>
    <scope>NUCLEOTIDE SEQUENCE [LARGE SCALE MRNA]</scope>
    <source>
        <strain>C57BL/6J</strain>
        <tissue>Ovary</tissue>
    </source>
</reference>
<reference key="2">
    <citation type="journal article" date="2004" name="Genome Res.">
        <title>The status, quality, and expansion of the NIH full-length cDNA project: the Mammalian Gene Collection (MGC).</title>
        <authorList>
            <consortium name="The MGC Project Team"/>
        </authorList>
    </citation>
    <scope>NUCLEOTIDE SEQUENCE [LARGE SCALE MRNA] OF 4-168</scope>
    <source>
        <tissue>Oocyte</tissue>
    </source>
</reference>
<reference key="3">
    <citation type="journal article" date="2020" name="Cells">
        <title>CRISPR/Cas9-Mediated Genome Editing Reveals Oosp Family Genes are Dispensable for Female Fertility in Mice.</title>
        <authorList>
            <person name="Abbasi F."/>
            <person name="Kodani M."/>
            <person name="Emori C."/>
            <person name="Kiyozumi D."/>
            <person name="Mori M."/>
            <person name="Fujihara Y."/>
            <person name="Ikawa M."/>
        </authorList>
    </citation>
    <scope>TISSUE SPECIFICITY</scope>
    <scope>DISRUPTION PHENOTYPE</scope>
</reference>
<reference key="4">
    <citation type="journal article" date="2022" name="Nat. Commun.">
        <title>Single-cell transcriptome and translatome dual-omics reveals potential mechanisms of human oocyte maturation.</title>
        <authorList>
            <person name="Hu W."/>
            <person name="Zeng H."/>
            <person name="Shi Y."/>
            <person name="Zhou C."/>
            <person name="Huang J."/>
            <person name="Jia L."/>
            <person name="Xu S."/>
            <person name="Feng X."/>
            <person name="Zeng Y."/>
            <person name="Xiong T."/>
            <person name="Huang W."/>
            <person name="Sun P."/>
            <person name="Chang Y."/>
            <person name="Li T."/>
            <person name="Fang C."/>
            <person name="Wu K."/>
            <person name="Cai L."/>
            <person name="Ni W."/>
            <person name="Li Y."/>
            <person name="Yang Z."/>
            <person name="Zhang Q.C."/>
            <person name="Chian R."/>
            <person name="Chen Z."/>
            <person name="Liang X."/>
            <person name="Kee K."/>
        </authorList>
    </citation>
    <scope>TISSUE SPECIFICITY</scope>
</reference>
<sequence>MGVSMALEVLVYLAVLVWTCAWDIDVDVSCSQDWMTVSVSAFSQNKRNPYIFADELYLGQNCRVTQIHAHQYDFIYPVSHCGIRTKVISNEIVCFETEMYFRPRNYCLELQIVPLQCSASRKSVWLMPLSTEEDPKPVKSPFMTDFEATPEELGLLNAHQAASSQNKR</sequence>
<dbReference type="EMBL" id="AK143411">
    <property type="protein sequence ID" value="BAE25368.1"/>
    <property type="molecule type" value="mRNA"/>
</dbReference>
<dbReference type="EMBL" id="BC099498">
    <property type="protein sequence ID" value="AAH99498.1"/>
    <property type="status" value="ALT_INIT"/>
    <property type="molecule type" value="mRNA"/>
</dbReference>
<dbReference type="CCDS" id="CCDS29606.1"/>
<dbReference type="RefSeq" id="NP_001032723.1">
    <property type="nucleotide sequence ID" value="NM_001037634.3"/>
</dbReference>
<dbReference type="SMR" id="Q4FZG8"/>
<dbReference type="FunCoup" id="Q4FZG8">
    <property type="interactions" value="83"/>
</dbReference>
<dbReference type="STRING" id="10090.ENSMUSP00000113931"/>
<dbReference type="PhosphoSitePlus" id="Q4FZG8"/>
<dbReference type="PaxDb" id="10090-ENSMUSP00000113931"/>
<dbReference type="Antibodypedia" id="27843">
    <property type="antibodies" value="56 antibodies from 17 providers"/>
</dbReference>
<dbReference type="Ensembl" id="ENSMUST00000121793.2">
    <property type="protein sequence ID" value="ENSMUSP00000113931.3"/>
    <property type="gene ID" value="ENSMUSG00000055895.7"/>
</dbReference>
<dbReference type="GeneID" id="225922"/>
<dbReference type="KEGG" id="mmu:225922"/>
<dbReference type="UCSC" id="uc008gss.1">
    <property type="organism name" value="mouse"/>
</dbReference>
<dbReference type="AGR" id="MGI:2684945"/>
<dbReference type="CTD" id="219990"/>
<dbReference type="MGI" id="MGI:2684945">
    <property type="gene designation" value="Oosp2"/>
</dbReference>
<dbReference type="VEuPathDB" id="HostDB:ENSMUSG00000055895"/>
<dbReference type="eggNOG" id="ENOG502T865">
    <property type="taxonomic scope" value="Eukaryota"/>
</dbReference>
<dbReference type="GeneTree" id="ENSGT00530000064049"/>
<dbReference type="HOGENOM" id="CLU_1717534_0_0_1"/>
<dbReference type="InParanoid" id="Q4FZG8"/>
<dbReference type="OMA" id="AALIWPC"/>
<dbReference type="OrthoDB" id="9829838at2759"/>
<dbReference type="PhylomeDB" id="Q4FZG8"/>
<dbReference type="TreeFam" id="TF338479"/>
<dbReference type="BioGRID-ORCS" id="225922">
    <property type="hits" value="2 hits in 77 CRISPR screens"/>
</dbReference>
<dbReference type="ChiTaRS" id="Oosp2">
    <property type="organism name" value="mouse"/>
</dbReference>
<dbReference type="PRO" id="PR:Q4FZG8"/>
<dbReference type="Proteomes" id="UP000000589">
    <property type="component" value="Chromosome 19"/>
</dbReference>
<dbReference type="RNAct" id="Q4FZG8">
    <property type="molecule type" value="protein"/>
</dbReference>
<dbReference type="Bgee" id="ENSMUSG00000055895">
    <property type="expression patterns" value="Expressed in primary oocyte and 34 other cell types or tissues"/>
</dbReference>
<dbReference type="ExpressionAtlas" id="Q4FZG8">
    <property type="expression patterns" value="baseline and differential"/>
</dbReference>
<dbReference type="GO" id="GO:0005737">
    <property type="term" value="C:cytoplasm"/>
    <property type="evidence" value="ECO:0000250"/>
    <property type="project" value="UniProtKB"/>
</dbReference>
<dbReference type="GO" id="GO:0005576">
    <property type="term" value="C:extracellular region"/>
    <property type="evidence" value="ECO:0007669"/>
    <property type="project" value="UniProtKB-SubCell"/>
</dbReference>
<dbReference type="GO" id="GO:0042585">
    <property type="term" value="C:germinal vesicle"/>
    <property type="evidence" value="ECO:0000314"/>
    <property type="project" value="UniProtKB"/>
</dbReference>
<dbReference type="Gene3D" id="2.60.40.3210">
    <property type="entry name" value="Zona pellucida, ZP-N domain"/>
    <property type="match status" value="1"/>
</dbReference>
<dbReference type="InterPro" id="IPR033222">
    <property type="entry name" value="PLAC1_fam"/>
</dbReference>
<dbReference type="InterPro" id="IPR055356">
    <property type="entry name" value="ZP-N"/>
</dbReference>
<dbReference type="PANTHER" id="PTHR14380:SF7">
    <property type="entry name" value="OOCYTE-SECRETED PROTEIN 2"/>
    <property type="match status" value="1"/>
</dbReference>
<dbReference type="PANTHER" id="PTHR14380">
    <property type="entry name" value="PLACENTA-SPECIFIC PROTEIN 1"/>
    <property type="match status" value="1"/>
</dbReference>
<dbReference type="Pfam" id="PF23344">
    <property type="entry name" value="ZP-N"/>
    <property type="match status" value="1"/>
</dbReference>
<keyword id="KW-0963">Cytoplasm</keyword>
<keyword id="KW-1185">Reference proteome</keyword>
<keyword id="KW-0964">Secreted</keyword>
<keyword id="KW-0732">Signal</keyword>
<evidence type="ECO:0000250" key="1">
    <source>
        <dbReference type="UniProtKB" id="Q86WS3"/>
    </source>
</evidence>
<evidence type="ECO:0000255" key="2"/>
<evidence type="ECO:0000269" key="3">
    <source>
    </source>
</evidence>
<evidence type="ECO:0000269" key="4">
    <source>
    </source>
</evidence>
<evidence type="ECO:0000305" key="5"/>
<accession>Q4FZG8</accession>
<accession>Q3UPM7</accession>
<organism>
    <name type="scientific">Mus musculus</name>
    <name type="common">Mouse</name>
    <dbReference type="NCBI Taxonomy" id="10090"/>
    <lineage>
        <taxon>Eukaryota</taxon>
        <taxon>Metazoa</taxon>
        <taxon>Chordata</taxon>
        <taxon>Craniata</taxon>
        <taxon>Vertebrata</taxon>
        <taxon>Euteleostomi</taxon>
        <taxon>Mammalia</taxon>
        <taxon>Eutheria</taxon>
        <taxon>Euarchontoglires</taxon>
        <taxon>Glires</taxon>
        <taxon>Rodentia</taxon>
        <taxon>Myomorpha</taxon>
        <taxon>Muroidea</taxon>
        <taxon>Muridae</taxon>
        <taxon>Murinae</taxon>
        <taxon>Mus</taxon>
        <taxon>Mus</taxon>
    </lineage>
</organism>
<proteinExistence type="evidence at transcript level"/>
<protein>
    <recommendedName>
        <fullName>Oocyte-secreted protein 2</fullName>
    </recommendedName>
    <alternativeName>
        <fullName>Placenta-specific 1-like protein</fullName>
    </alternativeName>
</protein>
<gene>
    <name type="primary">Oosp2</name>
    <name type="synonym">Gm99</name>
    <name type="synonym">Plac1l</name>
    <name type="synonym">Tmem122</name>
</gene>
<comment type="subcellular location">
    <subcellularLocation>
        <location evidence="1">Secreted</location>
    </subcellularLocation>
    <subcellularLocation>
        <location evidence="1">Cytoplasm</location>
    </subcellularLocation>
</comment>
<comment type="tissue specificity">
    <text evidence="3">Expressed in ovaries. Highly expressed in the germinal vesicles oocytes and metaphase II oocytes.</text>
</comment>
<comment type="disruption phenotype">
    <text evidence="3">Deficient mice are viable, with no overt abnormalities. Female mice are fertile. Triple-gene deletion of OOSP1-3 in mice retains fertility but causes significantly lower blastocyst and reduced offspring number.</text>
</comment>
<comment type="similarity">
    <text evidence="5">Belongs to the PLAC1 family.</text>
</comment>
<comment type="caution">
    <text evidence="4">Unlike human OOSP2, mouse OOSP2 seems not participate in folliculogenesis and oocyte maturation.</text>
</comment>
<comment type="sequence caution" evidence="5">
    <conflict type="erroneous initiation">
        <sequence resource="EMBL-CDS" id="AAH99498"/>
    </conflict>
    <text>Truncated N-terminus.</text>
</comment>
<feature type="signal peptide" evidence="2">
    <location>
        <begin position="1"/>
        <end position="21"/>
    </location>
</feature>
<feature type="chain" id="PRO_0000251151" description="Oocyte-secreted protein 2">
    <location>
        <begin position="22"/>
        <end position="168"/>
    </location>
</feature>